<sequence length="389" mass="42697">MEMKDYIFTSESVSEGHPDKVADQVSDAILDAILTQDKRARVACETLVTTGMAVIAGEITTTAVVDYPKVVRETIKEIGYNDSAMGFDWETCAVLVSIDKQSPDISQGVTEGEGMFKEQGAGDQGLMFGYACNETPELMPMTIMYSHRLTQKLAEVRKNGTLDFLRPDSKSQVSIQYVDDRPVRVDTVVISSQHTPEVSYETIKEGIIEEVVKKIIPVELMDDKTRFLINPTGRFVIGGPMGDCGLTGRKIIVDSYGGHGAHGGGAFSGKDPSKVDRSAAYMGRYVAKNLVAAGLCERCEVQVAYAIGVAEPVSVMVDTAGTGKIPSARIAEIIREVFDLRPRAIIEQLDLLRPIYRKTAAYGHFGRELPEFTWERTDKIDIIRQKAGI</sequence>
<accession>P61946</accession>
<gene>
    <name evidence="1" type="primary">metK</name>
    <name type="ordered locus">GSU1880</name>
</gene>
<reference key="1">
    <citation type="journal article" date="2003" name="Science">
        <title>Genome of Geobacter sulfurreducens: metal reduction in subsurface environments.</title>
        <authorList>
            <person name="Methe B.A."/>
            <person name="Nelson K.E."/>
            <person name="Eisen J.A."/>
            <person name="Paulsen I.T."/>
            <person name="Nelson W.C."/>
            <person name="Heidelberg J.F."/>
            <person name="Wu D."/>
            <person name="Wu M."/>
            <person name="Ward N.L."/>
            <person name="Beanan M.J."/>
            <person name="Dodson R.J."/>
            <person name="Madupu R."/>
            <person name="Brinkac L.M."/>
            <person name="Daugherty S.C."/>
            <person name="DeBoy R.T."/>
            <person name="Durkin A.S."/>
            <person name="Gwinn M.L."/>
            <person name="Kolonay J.F."/>
            <person name="Sullivan S.A."/>
            <person name="Haft D.H."/>
            <person name="Selengut J."/>
            <person name="Davidsen T.M."/>
            <person name="Zafar N."/>
            <person name="White O."/>
            <person name="Tran B."/>
            <person name="Romero C."/>
            <person name="Forberger H.A."/>
            <person name="Weidman J.F."/>
            <person name="Khouri H.M."/>
            <person name="Feldblyum T.V."/>
            <person name="Utterback T.R."/>
            <person name="Van Aken S.E."/>
            <person name="Lovley D.R."/>
            <person name="Fraser C.M."/>
        </authorList>
    </citation>
    <scope>NUCLEOTIDE SEQUENCE [LARGE SCALE GENOMIC DNA]</scope>
    <source>
        <strain>ATCC 51573 / DSM 12127 / PCA</strain>
    </source>
</reference>
<feature type="chain" id="PRO_0000174526" description="S-adenosylmethionine synthase">
    <location>
        <begin position="1"/>
        <end position="389"/>
    </location>
</feature>
<feature type="region of interest" description="Flexible loop" evidence="1">
    <location>
        <begin position="101"/>
        <end position="111"/>
    </location>
</feature>
<feature type="binding site" description="in other chain" evidence="1">
    <location>
        <position position="17"/>
    </location>
    <ligand>
        <name>ATP</name>
        <dbReference type="ChEBI" id="CHEBI:30616"/>
        <note>ligand shared between two neighboring subunits</note>
    </ligand>
</feature>
<feature type="binding site" evidence="1">
    <location>
        <position position="19"/>
    </location>
    <ligand>
        <name>Mg(2+)</name>
        <dbReference type="ChEBI" id="CHEBI:18420"/>
    </ligand>
</feature>
<feature type="binding site" evidence="1">
    <location>
        <position position="45"/>
    </location>
    <ligand>
        <name>K(+)</name>
        <dbReference type="ChEBI" id="CHEBI:29103"/>
    </ligand>
</feature>
<feature type="binding site" description="in other chain" evidence="1">
    <location>
        <position position="58"/>
    </location>
    <ligand>
        <name>L-methionine</name>
        <dbReference type="ChEBI" id="CHEBI:57844"/>
        <note>ligand shared between two neighboring subunits</note>
    </ligand>
</feature>
<feature type="binding site" description="in other chain" evidence="1">
    <location>
        <position position="101"/>
    </location>
    <ligand>
        <name>L-methionine</name>
        <dbReference type="ChEBI" id="CHEBI:57844"/>
        <note>ligand shared between two neighboring subunits</note>
    </ligand>
</feature>
<feature type="binding site" description="in other chain" evidence="1">
    <location>
        <begin position="168"/>
        <end position="170"/>
    </location>
    <ligand>
        <name>ATP</name>
        <dbReference type="ChEBI" id="CHEBI:30616"/>
        <note>ligand shared between two neighboring subunits</note>
    </ligand>
</feature>
<feature type="binding site" description="in other chain" evidence="1">
    <location>
        <begin position="234"/>
        <end position="235"/>
    </location>
    <ligand>
        <name>ATP</name>
        <dbReference type="ChEBI" id="CHEBI:30616"/>
        <note>ligand shared between two neighboring subunits</note>
    </ligand>
</feature>
<feature type="binding site" evidence="1">
    <location>
        <position position="243"/>
    </location>
    <ligand>
        <name>ATP</name>
        <dbReference type="ChEBI" id="CHEBI:30616"/>
        <note>ligand shared between two neighboring subunits</note>
    </ligand>
</feature>
<feature type="binding site" evidence="1">
    <location>
        <position position="243"/>
    </location>
    <ligand>
        <name>L-methionine</name>
        <dbReference type="ChEBI" id="CHEBI:57844"/>
        <note>ligand shared between two neighboring subunits</note>
    </ligand>
</feature>
<feature type="binding site" description="in other chain" evidence="1">
    <location>
        <begin position="249"/>
        <end position="250"/>
    </location>
    <ligand>
        <name>ATP</name>
        <dbReference type="ChEBI" id="CHEBI:30616"/>
        <note>ligand shared between two neighboring subunits</note>
    </ligand>
</feature>
<feature type="binding site" evidence="1">
    <location>
        <position position="266"/>
    </location>
    <ligand>
        <name>ATP</name>
        <dbReference type="ChEBI" id="CHEBI:30616"/>
        <note>ligand shared between two neighboring subunits</note>
    </ligand>
</feature>
<feature type="binding site" evidence="1">
    <location>
        <position position="270"/>
    </location>
    <ligand>
        <name>ATP</name>
        <dbReference type="ChEBI" id="CHEBI:30616"/>
        <note>ligand shared between two neighboring subunits</note>
    </ligand>
</feature>
<feature type="binding site" description="in other chain" evidence="1">
    <location>
        <position position="274"/>
    </location>
    <ligand>
        <name>L-methionine</name>
        <dbReference type="ChEBI" id="CHEBI:57844"/>
        <note>ligand shared between two neighboring subunits</note>
    </ligand>
</feature>
<dbReference type="EC" id="2.5.1.6" evidence="1"/>
<dbReference type="EMBL" id="AE017180">
    <property type="protein sequence ID" value="AAR35256.1"/>
    <property type="molecule type" value="Genomic_DNA"/>
</dbReference>
<dbReference type="RefSeq" id="NP_952929.3">
    <property type="nucleotide sequence ID" value="NC_002939.5"/>
</dbReference>
<dbReference type="RefSeq" id="WP_010942525.1">
    <property type="nucleotide sequence ID" value="NC_002939.5"/>
</dbReference>
<dbReference type="SMR" id="P61946"/>
<dbReference type="FunCoup" id="P61946">
    <property type="interactions" value="571"/>
</dbReference>
<dbReference type="STRING" id="243231.GSU1880"/>
<dbReference type="EnsemblBacteria" id="AAR35256">
    <property type="protein sequence ID" value="AAR35256"/>
    <property type="gene ID" value="GSU1880"/>
</dbReference>
<dbReference type="KEGG" id="gsu:GSU1880"/>
<dbReference type="PATRIC" id="fig|243231.5.peg.1918"/>
<dbReference type="eggNOG" id="COG0192">
    <property type="taxonomic scope" value="Bacteria"/>
</dbReference>
<dbReference type="HOGENOM" id="CLU_041802_1_1_7"/>
<dbReference type="InParanoid" id="P61946"/>
<dbReference type="OrthoDB" id="9801686at2"/>
<dbReference type="UniPathway" id="UPA00315">
    <property type="reaction ID" value="UER00080"/>
</dbReference>
<dbReference type="Proteomes" id="UP000000577">
    <property type="component" value="Chromosome"/>
</dbReference>
<dbReference type="GO" id="GO:0005829">
    <property type="term" value="C:cytosol"/>
    <property type="evidence" value="ECO:0000318"/>
    <property type="project" value="GO_Central"/>
</dbReference>
<dbReference type="GO" id="GO:0005524">
    <property type="term" value="F:ATP binding"/>
    <property type="evidence" value="ECO:0007669"/>
    <property type="project" value="UniProtKB-UniRule"/>
</dbReference>
<dbReference type="GO" id="GO:0000287">
    <property type="term" value="F:magnesium ion binding"/>
    <property type="evidence" value="ECO:0007669"/>
    <property type="project" value="UniProtKB-UniRule"/>
</dbReference>
<dbReference type="GO" id="GO:0004478">
    <property type="term" value="F:methionine adenosyltransferase activity"/>
    <property type="evidence" value="ECO:0000318"/>
    <property type="project" value="GO_Central"/>
</dbReference>
<dbReference type="GO" id="GO:0006730">
    <property type="term" value="P:one-carbon metabolic process"/>
    <property type="evidence" value="ECO:0007669"/>
    <property type="project" value="UniProtKB-KW"/>
</dbReference>
<dbReference type="GO" id="GO:0006556">
    <property type="term" value="P:S-adenosylmethionine biosynthetic process"/>
    <property type="evidence" value="ECO:0000318"/>
    <property type="project" value="GO_Central"/>
</dbReference>
<dbReference type="CDD" id="cd18079">
    <property type="entry name" value="S-AdoMet_synt"/>
    <property type="match status" value="1"/>
</dbReference>
<dbReference type="FunFam" id="3.30.300.10:FF:000003">
    <property type="entry name" value="S-adenosylmethionine synthase"/>
    <property type="match status" value="1"/>
</dbReference>
<dbReference type="FunFam" id="3.30.300.10:FF:000004">
    <property type="entry name" value="S-adenosylmethionine synthase"/>
    <property type="match status" value="1"/>
</dbReference>
<dbReference type="Gene3D" id="3.30.300.10">
    <property type="match status" value="3"/>
</dbReference>
<dbReference type="HAMAP" id="MF_00086">
    <property type="entry name" value="S_AdoMet_synth1"/>
    <property type="match status" value="1"/>
</dbReference>
<dbReference type="InterPro" id="IPR022631">
    <property type="entry name" value="ADOMET_SYNTHASE_CS"/>
</dbReference>
<dbReference type="InterPro" id="IPR022630">
    <property type="entry name" value="S-AdoMet_synt_C"/>
</dbReference>
<dbReference type="InterPro" id="IPR022629">
    <property type="entry name" value="S-AdoMet_synt_central"/>
</dbReference>
<dbReference type="InterPro" id="IPR022628">
    <property type="entry name" value="S-AdoMet_synt_N"/>
</dbReference>
<dbReference type="InterPro" id="IPR002133">
    <property type="entry name" value="S-AdoMet_synthetase"/>
</dbReference>
<dbReference type="InterPro" id="IPR022636">
    <property type="entry name" value="S-AdoMet_synthetase_sfam"/>
</dbReference>
<dbReference type="NCBIfam" id="TIGR01034">
    <property type="entry name" value="metK"/>
    <property type="match status" value="1"/>
</dbReference>
<dbReference type="PANTHER" id="PTHR11964">
    <property type="entry name" value="S-ADENOSYLMETHIONINE SYNTHETASE"/>
    <property type="match status" value="1"/>
</dbReference>
<dbReference type="Pfam" id="PF02773">
    <property type="entry name" value="S-AdoMet_synt_C"/>
    <property type="match status" value="1"/>
</dbReference>
<dbReference type="Pfam" id="PF02772">
    <property type="entry name" value="S-AdoMet_synt_M"/>
    <property type="match status" value="1"/>
</dbReference>
<dbReference type="Pfam" id="PF00438">
    <property type="entry name" value="S-AdoMet_synt_N"/>
    <property type="match status" value="1"/>
</dbReference>
<dbReference type="PIRSF" id="PIRSF000497">
    <property type="entry name" value="MAT"/>
    <property type="match status" value="1"/>
</dbReference>
<dbReference type="SUPFAM" id="SSF55973">
    <property type="entry name" value="S-adenosylmethionine synthetase"/>
    <property type="match status" value="3"/>
</dbReference>
<dbReference type="PROSITE" id="PS00376">
    <property type="entry name" value="ADOMET_SYNTHASE_1"/>
    <property type="match status" value="1"/>
</dbReference>
<dbReference type="PROSITE" id="PS00377">
    <property type="entry name" value="ADOMET_SYNTHASE_2"/>
    <property type="match status" value="1"/>
</dbReference>
<keyword id="KW-0067">ATP-binding</keyword>
<keyword id="KW-0963">Cytoplasm</keyword>
<keyword id="KW-0460">Magnesium</keyword>
<keyword id="KW-0479">Metal-binding</keyword>
<keyword id="KW-0547">Nucleotide-binding</keyword>
<keyword id="KW-0554">One-carbon metabolism</keyword>
<keyword id="KW-0630">Potassium</keyword>
<keyword id="KW-1185">Reference proteome</keyword>
<keyword id="KW-0808">Transferase</keyword>
<comment type="function">
    <text evidence="1">Catalyzes the formation of S-adenosylmethionine (AdoMet) from methionine and ATP. The overall synthetic reaction is composed of two sequential steps, AdoMet formation and the subsequent tripolyphosphate hydrolysis which occurs prior to release of AdoMet from the enzyme.</text>
</comment>
<comment type="catalytic activity">
    <reaction evidence="1">
        <text>L-methionine + ATP + H2O = S-adenosyl-L-methionine + phosphate + diphosphate</text>
        <dbReference type="Rhea" id="RHEA:21080"/>
        <dbReference type="ChEBI" id="CHEBI:15377"/>
        <dbReference type="ChEBI" id="CHEBI:30616"/>
        <dbReference type="ChEBI" id="CHEBI:33019"/>
        <dbReference type="ChEBI" id="CHEBI:43474"/>
        <dbReference type="ChEBI" id="CHEBI:57844"/>
        <dbReference type="ChEBI" id="CHEBI:59789"/>
        <dbReference type="EC" id="2.5.1.6"/>
    </reaction>
</comment>
<comment type="cofactor">
    <cofactor evidence="1">
        <name>Mg(2+)</name>
        <dbReference type="ChEBI" id="CHEBI:18420"/>
    </cofactor>
    <text evidence="1">Binds 2 divalent ions per subunit.</text>
</comment>
<comment type="cofactor">
    <cofactor evidence="1">
        <name>K(+)</name>
        <dbReference type="ChEBI" id="CHEBI:29103"/>
    </cofactor>
    <text evidence="1">Binds 1 potassium ion per subunit.</text>
</comment>
<comment type="pathway">
    <text evidence="1">Amino-acid biosynthesis; S-adenosyl-L-methionine biosynthesis; S-adenosyl-L-methionine from L-methionine: step 1/1.</text>
</comment>
<comment type="subunit">
    <text evidence="1">Homotetramer; dimer of dimers.</text>
</comment>
<comment type="subcellular location">
    <subcellularLocation>
        <location evidence="1">Cytoplasm</location>
    </subcellularLocation>
</comment>
<comment type="similarity">
    <text evidence="1">Belongs to the AdoMet synthase family.</text>
</comment>
<protein>
    <recommendedName>
        <fullName evidence="1">S-adenosylmethionine synthase</fullName>
        <shortName evidence="1">AdoMet synthase</shortName>
        <ecNumber evidence="1">2.5.1.6</ecNumber>
    </recommendedName>
    <alternativeName>
        <fullName evidence="1">MAT</fullName>
    </alternativeName>
    <alternativeName>
        <fullName evidence="1">Methionine adenosyltransferase</fullName>
    </alternativeName>
</protein>
<proteinExistence type="inferred from homology"/>
<evidence type="ECO:0000255" key="1">
    <source>
        <dbReference type="HAMAP-Rule" id="MF_00086"/>
    </source>
</evidence>
<organism>
    <name type="scientific">Geobacter sulfurreducens (strain ATCC 51573 / DSM 12127 / PCA)</name>
    <dbReference type="NCBI Taxonomy" id="243231"/>
    <lineage>
        <taxon>Bacteria</taxon>
        <taxon>Pseudomonadati</taxon>
        <taxon>Thermodesulfobacteriota</taxon>
        <taxon>Desulfuromonadia</taxon>
        <taxon>Geobacterales</taxon>
        <taxon>Geobacteraceae</taxon>
        <taxon>Geobacter</taxon>
    </lineage>
</organism>
<name>METK_GEOSL</name>